<protein>
    <recommendedName>
        <fullName evidence="1">Nicotinate phosphoribosyltransferase</fullName>
        <shortName evidence="1">NAPRTase</shortName>
        <ecNumber evidence="1">6.3.4.21</ecNumber>
    </recommendedName>
</protein>
<feature type="chain" id="PRO_0000205833" description="Nicotinate phosphoribosyltransferase">
    <location>
        <begin position="1"/>
        <end position="402"/>
    </location>
</feature>
<feature type="modified residue" description="Phosphohistidine; by autocatalysis" evidence="1">
    <location>
        <position position="224"/>
    </location>
</feature>
<gene>
    <name evidence="1" type="primary">pncB</name>
    <name type="ordered locus">NMA1706</name>
</gene>
<sequence>MTGIIHSLLDTDLYKFTMLQVVLHQFPQTHSLYEFRCRNASTVYPLADIKEDLEVELDALCQLRFTHDELDYLRSLRFIKSDFVDYLELFQLQRRFVEVGTDDKGRLNIRIEGPMIQAMFFEIFILAIVNELYFRRLETPAVIEEGERRLQAKAARLKEIAAAQNPDEPPFLISDFGTRRRYKLAWQEHVIRTLLEAAPSIVRGTSNVFLAKKLGITPIGTMAHEFLQAFQALDVRLRNFQKAALESWVHEYRGDLGVALTDVVGMDAFLRDFDLYFAKLFDGLRHDSGDPYIWGDKAYAHYQKLKIDSRTKMLTFSDGLDIERSWALHQYFKDRFKTGFGIGTNLTNDMGHTPLNIVLKLVECNGQSVAKLSDSPGKTMTNNSTFLAYLRQVFDVPEPETP</sequence>
<proteinExistence type="inferred from homology"/>
<organism>
    <name type="scientific">Neisseria meningitidis serogroup A / serotype 4A (strain DSM 15465 / Z2491)</name>
    <dbReference type="NCBI Taxonomy" id="122587"/>
    <lineage>
        <taxon>Bacteria</taxon>
        <taxon>Pseudomonadati</taxon>
        <taxon>Pseudomonadota</taxon>
        <taxon>Betaproteobacteria</taxon>
        <taxon>Neisseriales</taxon>
        <taxon>Neisseriaceae</taxon>
        <taxon>Neisseria</taxon>
    </lineage>
</organism>
<comment type="function">
    <text evidence="1">Catalyzes the synthesis of beta-nicotinate D-ribonucleotide from nicotinate and 5-phospho-D-ribose 1-phosphate at the expense of ATP.</text>
</comment>
<comment type="catalytic activity">
    <reaction evidence="1">
        <text>nicotinate + 5-phospho-alpha-D-ribose 1-diphosphate + ATP + H2O = nicotinate beta-D-ribonucleotide + ADP + phosphate + diphosphate</text>
        <dbReference type="Rhea" id="RHEA:36163"/>
        <dbReference type="ChEBI" id="CHEBI:15377"/>
        <dbReference type="ChEBI" id="CHEBI:30616"/>
        <dbReference type="ChEBI" id="CHEBI:32544"/>
        <dbReference type="ChEBI" id="CHEBI:33019"/>
        <dbReference type="ChEBI" id="CHEBI:43474"/>
        <dbReference type="ChEBI" id="CHEBI:57502"/>
        <dbReference type="ChEBI" id="CHEBI:58017"/>
        <dbReference type="ChEBI" id="CHEBI:456216"/>
        <dbReference type="EC" id="6.3.4.21"/>
    </reaction>
</comment>
<comment type="pathway">
    <text evidence="1">Cofactor biosynthesis; NAD(+) biosynthesis; nicotinate D-ribonucleotide from nicotinate: step 1/1.</text>
</comment>
<comment type="PTM">
    <text evidence="1">Transiently phosphorylated on a His residue during the reaction cycle. Phosphorylation strongly increases the affinity for substrates and increases the rate of nicotinate D-ribonucleotide production. Dephosphorylation regenerates the low-affinity form of the enzyme, leading to product release.</text>
</comment>
<comment type="similarity">
    <text evidence="1">Belongs to the NAPRTase family.</text>
</comment>
<comment type="sequence caution" evidence="2">
    <conflict type="erroneous initiation">
        <sequence resource="EMBL-CDS" id="CAM08835"/>
    </conflict>
    <text>Extended N-terminus.</text>
</comment>
<reference key="1">
    <citation type="journal article" date="2000" name="Nature">
        <title>Complete DNA sequence of a serogroup A strain of Neisseria meningitidis Z2491.</title>
        <authorList>
            <person name="Parkhill J."/>
            <person name="Achtman M."/>
            <person name="James K.D."/>
            <person name="Bentley S.D."/>
            <person name="Churcher C.M."/>
            <person name="Klee S.R."/>
            <person name="Morelli G."/>
            <person name="Basham D."/>
            <person name="Brown D."/>
            <person name="Chillingworth T."/>
            <person name="Davies R.M."/>
            <person name="Davis P."/>
            <person name="Devlin K."/>
            <person name="Feltwell T."/>
            <person name="Hamlin N."/>
            <person name="Holroyd S."/>
            <person name="Jagels K."/>
            <person name="Leather S."/>
            <person name="Moule S."/>
            <person name="Mungall K.L."/>
            <person name="Quail M.A."/>
            <person name="Rajandream M.A."/>
            <person name="Rutherford K.M."/>
            <person name="Simmonds M."/>
            <person name="Skelton J."/>
            <person name="Whitehead S."/>
            <person name="Spratt B.G."/>
            <person name="Barrell B.G."/>
        </authorList>
    </citation>
    <scope>NUCLEOTIDE SEQUENCE [LARGE SCALE GENOMIC DNA]</scope>
    <source>
        <strain>DSM 15465 / Z2491</strain>
    </source>
</reference>
<keyword id="KW-0436">Ligase</keyword>
<keyword id="KW-0597">Phosphoprotein</keyword>
<keyword id="KW-0662">Pyridine nucleotide biosynthesis</keyword>
<dbReference type="EC" id="6.3.4.21" evidence="1"/>
<dbReference type="EMBL" id="AL157959">
    <property type="protein sequence ID" value="CAM08835.1"/>
    <property type="status" value="ALT_INIT"/>
    <property type="molecule type" value="Genomic_DNA"/>
</dbReference>
<dbReference type="RefSeq" id="WP_002246290.1">
    <property type="nucleotide sequence ID" value="NC_003116.1"/>
</dbReference>
<dbReference type="SMR" id="Q9JTM8"/>
<dbReference type="EnsemblBacteria" id="CAM08835">
    <property type="protein sequence ID" value="CAM08835"/>
    <property type="gene ID" value="NMA1706"/>
</dbReference>
<dbReference type="KEGG" id="nma:NMA1706"/>
<dbReference type="HOGENOM" id="CLU_030991_1_0_4"/>
<dbReference type="UniPathway" id="UPA00253">
    <property type="reaction ID" value="UER00457"/>
</dbReference>
<dbReference type="Proteomes" id="UP000000626">
    <property type="component" value="Chromosome"/>
</dbReference>
<dbReference type="GO" id="GO:0005829">
    <property type="term" value="C:cytosol"/>
    <property type="evidence" value="ECO:0007669"/>
    <property type="project" value="TreeGrafter"/>
</dbReference>
<dbReference type="GO" id="GO:0004516">
    <property type="term" value="F:nicotinate phosphoribosyltransferase activity"/>
    <property type="evidence" value="ECO:0007669"/>
    <property type="project" value="UniProtKB-UniRule"/>
</dbReference>
<dbReference type="GO" id="GO:0034355">
    <property type="term" value="P:NAD biosynthetic process via the salvage pathway"/>
    <property type="evidence" value="ECO:0007669"/>
    <property type="project" value="TreeGrafter"/>
</dbReference>
<dbReference type="CDD" id="cd01401">
    <property type="entry name" value="PncB_like"/>
    <property type="match status" value="1"/>
</dbReference>
<dbReference type="FunFam" id="3.20.140.10:FF:000008">
    <property type="entry name" value="Nicotinate phosphoribosyltransferase"/>
    <property type="match status" value="1"/>
</dbReference>
<dbReference type="Gene3D" id="3.20.140.10">
    <property type="entry name" value="nicotinate phosphoribosyltransferase"/>
    <property type="match status" value="1"/>
</dbReference>
<dbReference type="HAMAP" id="MF_00570">
    <property type="entry name" value="NAPRTase"/>
    <property type="match status" value="1"/>
</dbReference>
<dbReference type="InterPro" id="IPR041525">
    <property type="entry name" value="N/Namide_PRibTrfase"/>
</dbReference>
<dbReference type="InterPro" id="IPR040727">
    <property type="entry name" value="NAPRTase_N"/>
</dbReference>
<dbReference type="InterPro" id="IPR006406">
    <property type="entry name" value="Nic_PRibTrfase"/>
</dbReference>
<dbReference type="InterPro" id="IPR007229">
    <property type="entry name" value="Nic_PRibTrfase-Fam"/>
</dbReference>
<dbReference type="InterPro" id="IPR036068">
    <property type="entry name" value="Nicotinate_pribotase-like_C"/>
</dbReference>
<dbReference type="NCBIfam" id="TIGR01514">
    <property type="entry name" value="NAPRTase"/>
    <property type="match status" value="1"/>
</dbReference>
<dbReference type="NCBIfam" id="NF003704">
    <property type="entry name" value="PRK05321.1"/>
    <property type="match status" value="1"/>
</dbReference>
<dbReference type="PANTHER" id="PTHR11098">
    <property type="entry name" value="NICOTINATE PHOSPHORIBOSYLTRANSFERASE"/>
    <property type="match status" value="1"/>
</dbReference>
<dbReference type="PANTHER" id="PTHR11098:SF1">
    <property type="entry name" value="NICOTINATE PHOSPHORIBOSYLTRANSFERASE"/>
    <property type="match status" value="1"/>
</dbReference>
<dbReference type="Pfam" id="PF04095">
    <property type="entry name" value="NAPRTase"/>
    <property type="match status" value="1"/>
</dbReference>
<dbReference type="Pfam" id="PF17767">
    <property type="entry name" value="NAPRTase_N"/>
    <property type="match status" value="1"/>
</dbReference>
<dbReference type="PIRSF" id="PIRSF000484">
    <property type="entry name" value="NAPRT"/>
    <property type="match status" value="1"/>
</dbReference>
<dbReference type="SUPFAM" id="SSF51690">
    <property type="entry name" value="Nicotinate/Quinolinate PRTase C-terminal domain-like"/>
    <property type="match status" value="1"/>
</dbReference>
<dbReference type="SUPFAM" id="SSF54675">
    <property type="entry name" value="Nicotinate/Quinolinate PRTase N-terminal domain-like"/>
    <property type="match status" value="1"/>
</dbReference>
<accession>Q9JTM8</accession>
<accession>A1ISS3</accession>
<name>PNCB_NEIMA</name>
<evidence type="ECO:0000255" key="1">
    <source>
        <dbReference type="HAMAP-Rule" id="MF_00570"/>
    </source>
</evidence>
<evidence type="ECO:0000305" key="2"/>